<name>NAIF1_BOVIN</name>
<keyword id="KW-0053">Apoptosis</keyword>
<keyword id="KW-0539">Nucleus</keyword>
<keyword id="KW-1185">Reference proteome</keyword>
<feature type="chain" id="PRO_0000342205" description="Nuclear apoptosis-inducing factor 1">
    <location>
        <begin position="1"/>
        <end position="327"/>
    </location>
</feature>
<feature type="region of interest" description="Required for nuclear localization and apoptosis-inducing activity" evidence="1">
    <location>
        <begin position="1"/>
        <end position="70"/>
    </location>
</feature>
<feature type="region of interest" description="Disordered" evidence="2">
    <location>
        <begin position="88"/>
        <end position="118"/>
    </location>
</feature>
<feature type="region of interest" description="Disordered" evidence="2">
    <location>
        <begin position="303"/>
        <end position="327"/>
    </location>
</feature>
<feature type="compositionally biased region" description="Low complexity" evidence="2">
    <location>
        <begin position="88"/>
        <end position="98"/>
    </location>
</feature>
<feature type="compositionally biased region" description="Gly residues" evidence="2">
    <location>
        <begin position="104"/>
        <end position="117"/>
    </location>
</feature>
<feature type="compositionally biased region" description="Polar residues" evidence="2">
    <location>
        <begin position="316"/>
        <end position="327"/>
    </location>
</feature>
<reference key="1">
    <citation type="submission" date="2007-07" db="EMBL/GenBank/DDBJ databases">
        <authorList>
            <consortium name="NIH - Mammalian Gene Collection (MGC) project"/>
        </authorList>
    </citation>
    <scope>NUCLEOTIDE SEQUENCE [LARGE SCALE MRNA]</scope>
    <source>
        <strain>Hereford</strain>
        <tissue>Placenta</tissue>
    </source>
</reference>
<proteinExistence type="evidence at transcript level"/>
<accession>A7MBH3</accession>
<dbReference type="EMBL" id="BC151557">
    <property type="protein sequence ID" value="AAI51558.1"/>
    <property type="molecule type" value="mRNA"/>
</dbReference>
<dbReference type="RefSeq" id="NP_001094544.1">
    <property type="nucleotide sequence ID" value="NM_001101074.2"/>
</dbReference>
<dbReference type="FunCoup" id="A7MBH3">
    <property type="interactions" value="2821"/>
</dbReference>
<dbReference type="STRING" id="9913.ENSBTAP00000016123"/>
<dbReference type="PaxDb" id="9913-ENSBTAP00000016123"/>
<dbReference type="Ensembl" id="ENSBTAT00000016123.4">
    <property type="protein sequence ID" value="ENSBTAP00000016123.3"/>
    <property type="gene ID" value="ENSBTAG00000012156.4"/>
</dbReference>
<dbReference type="GeneID" id="510689"/>
<dbReference type="KEGG" id="bta:510689"/>
<dbReference type="CTD" id="203245"/>
<dbReference type="VEuPathDB" id="HostDB:ENSBTAG00000012156"/>
<dbReference type="VGNC" id="VGNC:31872">
    <property type="gene designation" value="NAIF1"/>
</dbReference>
<dbReference type="eggNOG" id="ENOG502QW9U">
    <property type="taxonomic scope" value="Eukaryota"/>
</dbReference>
<dbReference type="GeneTree" id="ENSGT00450000040324"/>
<dbReference type="HOGENOM" id="CLU_078961_0_0_1"/>
<dbReference type="InParanoid" id="A7MBH3"/>
<dbReference type="OMA" id="QQDGMIQ"/>
<dbReference type="OrthoDB" id="9039237at2759"/>
<dbReference type="TreeFam" id="TF332812"/>
<dbReference type="Proteomes" id="UP000009136">
    <property type="component" value="Chromosome 11"/>
</dbReference>
<dbReference type="Bgee" id="ENSBTAG00000012156">
    <property type="expression patterns" value="Expressed in semen and 104 other cell types or tissues"/>
</dbReference>
<dbReference type="GO" id="GO:0005829">
    <property type="term" value="C:cytosol"/>
    <property type="evidence" value="ECO:0007669"/>
    <property type="project" value="Ensembl"/>
</dbReference>
<dbReference type="GO" id="GO:0005739">
    <property type="term" value="C:mitochondrion"/>
    <property type="evidence" value="ECO:0007669"/>
    <property type="project" value="GOC"/>
</dbReference>
<dbReference type="GO" id="GO:0005654">
    <property type="term" value="C:nucleoplasm"/>
    <property type="evidence" value="ECO:0007669"/>
    <property type="project" value="Ensembl"/>
</dbReference>
<dbReference type="GO" id="GO:0005634">
    <property type="term" value="C:nucleus"/>
    <property type="evidence" value="ECO:0000318"/>
    <property type="project" value="GO_Central"/>
</dbReference>
<dbReference type="GO" id="GO:0005886">
    <property type="term" value="C:plasma membrane"/>
    <property type="evidence" value="ECO:0007669"/>
    <property type="project" value="Ensembl"/>
</dbReference>
<dbReference type="GO" id="GO:0030308">
    <property type="term" value="P:negative regulation of cell growth"/>
    <property type="evidence" value="ECO:0007669"/>
    <property type="project" value="Ensembl"/>
</dbReference>
<dbReference type="GO" id="GO:1902108">
    <property type="term" value="P:regulation of mitochondrial membrane permeability involved in apoptotic process"/>
    <property type="evidence" value="ECO:0007669"/>
    <property type="project" value="Ensembl"/>
</dbReference>
<dbReference type="InterPro" id="IPR028002">
    <property type="entry name" value="Myb_DNA-bind_5"/>
</dbReference>
<dbReference type="PANTHER" id="PTHR23098">
    <property type="entry name" value="AGAP001331-PA-RELATED"/>
    <property type="match status" value="1"/>
</dbReference>
<dbReference type="PANTHER" id="PTHR23098:SF7">
    <property type="entry name" value="NUCLEAR APOPTOSIS-INDUCING FACTOR 1"/>
    <property type="match status" value="1"/>
</dbReference>
<dbReference type="Pfam" id="PF13873">
    <property type="entry name" value="Myb_DNA-bind_5"/>
    <property type="match status" value="1"/>
</dbReference>
<evidence type="ECO:0000250" key="1"/>
<evidence type="ECO:0000256" key="2">
    <source>
        <dbReference type="SAM" id="MobiDB-lite"/>
    </source>
</evidence>
<evidence type="ECO:0000305" key="3"/>
<organism>
    <name type="scientific">Bos taurus</name>
    <name type="common">Bovine</name>
    <dbReference type="NCBI Taxonomy" id="9913"/>
    <lineage>
        <taxon>Eukaryota</taxon>
        <taxon>Metazoa</taxon>
        <taxon>Chordata</taxon>
        <taxon>Craniata</taxon>
        <taxon>Vertebrata</taxon>
        <taxon>Euteleostomi</taxon>
        <taxon>Mammalia</taxon>
        <taxon>Eutheria</taxon>
        <taxon>Laurasiatheria</taxon>
        <taxon>Artiodactyla</taxon>
        <taxon>Ruminantia</taxon>
        <taxon>Pecora</taxon>
        <taxon>Bovidae</taxon>
        <taxon>Bovinae</taxon>
        <taxon>Bos</taxon>
    </lineage>
</organism>
<comment type="function">
    <text evidence="1">Induces apoptosis.</text>
</comment>
<comment type="subunit">
    <text evidence="1">Interacts with HARBI1.</text>
</comment>
<comment type="subcellular location">
    <subcellularLocation>
        <location evidence="1">Nucleus</location>
    </subcellularLocation>
</comment>
<comment type="similarity">
    <text evidence="3">Belongs to the NAIF1 family.</text>
</comment>
<sequence length="327" mass="35194">MAVPAKKRKMNFSEREVEIIVEELELKKHLLVNHFNAGVPLAAKSAAWHGILRRVNAVATCRRELPEVKKKWSDLKTEVRRKVAQVRAAVEGGEAPGPTEEDGAGGPGTGGGSGAGGPAVAPVLLTPMQQRICNLLGEATIISLPSTAEIHPVALGPTATAAAATVTLTQIPTETTYHTLEEGVVEYCTAEAPPPLPAEAPVEMMAQHADTSVKPQALKSRIALNSAKLIQEQRVTNLHVKEIAQHLEQQNDLLQMIRRSQEVQACAQERQAQAMEGTQAALSVLIQVLRPMIKDFRRYLQSNMPNPATASEPGQVAQNGQPDSIIQ</sequence>
<gene>
    <name type="primary">NAIF1</name>
</gene>
<protein>
    <recommendedName>
        <fullName>Nuclear apoptosis-inducing factor 1</fullName>
    </recommendedName>
</protein>